<keyword id="KW-0032">Aminotransferase</keyword>
<keyword id="KW-0045">Antibiotic biosynthesis</keyword>
<keyword id="KW-0663">Pyridoxal phosphate</keyword>
<keyword id="KW-0808">Transferase</keyword>
<sequence length="392" mass="43095">MSTHPVLDWSRSAEHLRRSHGVTTDPRPDEDGHYPCVLTRGSGTRVYDLDGNAYLDLTGSFGSVLIGHAEPAVVRAVTDVLSEGNLFYTGASPRRLALAERLLDWFPWSEQAIFYRTGSCAVSAAARLAQHATGRNRVLSSGYHGWHDWHLEAVPEAKPKTFESYATEFHNDLALYRSWLDRHGEEIAAVVVTPEPHRFDHAYYQELREVAKEHGCLFVVDEVKTGFRAGAGGFSALAGIEPDAVTVSKGMANGHSISAVVGQRQLTQELSEAHVWSTYQNEQVGFAAALASLDFLERHDVAAVTRRTGEAVRQGVLQLFAEHGLPVGAPGWGPMFELDFDAADEGLAERLEAALLRHGIFCDTGDDFNMMFHTAEHTDELLERFAAALGDL</sequence>
<feature type="chain" id="PRO_0000421733" description="2'-deamino-2'-hydroxyneamine transaminase">
    <location>
        <begin position="1"/>
        <end position="392"/>
    </location>
</feature>
<feature type="modified residue" description="N6-(pyridoxal phosphate)lysine" evidence="1">
    <location>
        <position position="249"/>
    </location>
</feature>
<name>KACL_STRKN</name>
<evidence type="ECO:0000250" key="1"/>
<evidence type="ECO:0000269" key="2">
    <source>
    </source>
</evidence>
<evidence type="ECO:0000305" key="3"/>
<protein>
    <recommendedName>
        <fullName>2'-deamino-2'-hydroxyneamine transaminase</fullName>
        <ecNumber evidence="2">2.6.1.94</ecNumber>
    </recommendedName>
    <alternativeName>
        <fullName>Kanamycin biosynthesis protein B</fullName>
    </alternativeName>
    <alternativeName>
        <fullName>Neamine transaminase KanB</fullName>
        <ecNumber evidence="2">2.6.1.93</ecNumber>
    </alternativeName>
</protein>
<comment type="function">
    <text evidence="2">Aminotransferase that has 6'-oxoglucosaminyl:L-glutamate aminotransferase activity by catalyzing pyridoxal-5'-phosphate-mediated transamination leading to the conversion of paromamine to neamine in the biosynthetic pathway of kanamycin B.</text>
</comment>
<comment type="catalytic activity">
    <reaction evidence="2">
        <text>neamine + 2-oxoglutarate = 6'-oxoparomamine + L-glutamate</text>
        <dbReference type="Rhea" id="RHEA:34039"/>
        <dbReference type="ChEBI" id="CHEBI:16810"/>
        <dbReference type="ChEBI" id="CHEBI:29985"/>
        <dbReference type="ChEBI" id="CHEBI:65016"/>
        <dbReference type="ChEBI" id="CHEBI:65076"/>
        <dbReference type="EC" id="2.6.1.93"/>
    </reaction>
</comment>
<comment type="catalytic activity">
    <reaction evidence="2">
        <text>2'-deamino-2'-hydroxyneamine + 2-oxoglutarate = 2'-deamino-2'-hydroxy-6'-dehydroparomamine + L-glutamate</text>
        <dbReference type="Rhea" id="RHEA:34299"/>
        <dbReference type="ChEBI" id="CHEBI:16810"/>
        <dbReference type="ChEBI" id="CHEBI:29985"/>
        <dbReference type="ChEBI" id="CHEBI:67213"/>
        <dbReference type="ChEBI" id="CHEBI:67214"/>
        <dbReference type="EC" id="2.6.1.94"/>
    </reaction>
</comment>
<comment type="cofactor">
    <cofactor evidence="1">
        <name>pyridoxal 5'-phosphate</name>
        <dbReference type="ChEBI" id="CHEBI:597326"/>
    </cofactor>
</comment>
<comment type="pathway">
    <text>Antibiotic biosynthesis; kanamycin biosynthesis.</text>
</comment>
<comment type="similarity">
    <text evidence="3">Belongs to the class-III pyridoxal-phosphate-dependent aminotransferase family.</text>
</comment>
<gene>
    <name type="primary">kacL</name>
    <name type="synonym">kanB</name>
</gene>
<proteinExistence type="evidence at protein level"/>
<reference key="1">
    <citation type="journal article" date="2004" name="Arch. Biochem. Biophys.">
        <title>A gene cluster for biosynthesis of kanamycin from Streptomyces kanamyceticus: comparison with gentamicin biosynthetic gene cluster.</title>
        <authorList>
            <person name="Kharel M.K."/>
            <person name="Subba B."/>
            <person name="Basnet D.B."/>
            <person name="Woo J.S."/>
            <person name="Lee H.C."/>
            <person name="Liou K."/>
            <person name="Sohng J.K."/>
        </authorList>
    </citation>
    <scope>NUCLEOTIDE SEQUENCE [GENOMIC DNA]</scope>
    <source>
        <strain>ATCC 12853 / DSM 40500 / NBRC 13414 / NCIMB 9343 / NRRL B-2535 / VKM Ac-837</strain>
    </source>
</reference>
<reference key="2">
    <citation type="journal article" date="2004" name="J. Antibiot.">
        <title>The kanamycin biosynthetic gene cluster from Streptomyces kanamyceticus.</title>
        <authorList>
            <person name="Yanai K."/>
            <person name="Murakami T."/>
        </authorList>
    </citation>
    <scope>NUCLEOTIDE SEQUENCE [GENOMIC DNA]</scope>
</reference>
<reference key="3">
    <citation type="submission" date="2004-02" db="EMBL/GenBank/DDBJ databases">
        <title>Cloning and sequencing of the kanamycin biosynthetic gene cluster from Streptomyces kanamyceticus DSM 40500.</title>
        <authorList>
            <person name="Aboshanab K.M.A."/>
            <person name="Schmidt-Beissner H."/>
            <person name="Wehmeier U.F."/>
            <person name="Welzel K."/>
            <person name="Vente A."/>
            <person name="Piepersberg W."/>
        </authorList>
    </citation>
    <scope>NUCLEOTIDE SEQUENCE [GENOMIC DNA]</scope>
    <source>
        <strain>ATCC 12853 / DSM 40500 / NBRC 13414 / NCIMB 9343 / NRRL B-2535 / VKM Ac-837</strain>
    </source>
</reference>
<reference key="4">
    <citation type="journal article" date="2011" name="Nat. Chem. Biol.">
        <title>Discovery of parallel pathways of kanamycin biosynthesis allows antibiotic manipulation.</title>
        <authorList>
            <person name="Park J.W."/>
            <person name="Park S.R."/>
            <person name="Nepal K.K."/>
            <person name="Han A.R."/>
            <person name="Ban Y.H."/>
            <person name="Yoo Y.J."/>
            <person name="Kim E.J."/>
            <person name="Kim E.M."/>
            <person name="Kim D."/>
            <person name="Sohng J.K."/>
            <person name="Yoon Y.J."/>
        </authorList>
    </citation>
    <scope>FUNCTION</scope>
    <scope>CATALYTIC ACTIVITY</scope>
</reference>
<accession>Q6L741</accession>
<organism>
    <name type="scientific">Streptomyces kanamyceticus</name>
    <dbReference type="NCBI Taxonomy" id="1967"/>
    <lineage>
        <taxon>Bacteria</taxon>
        <taxon>Bacillati</taxon>
        <taxon>Actinomycetota</taxon>
        <taxon>Actinomycetes</taxon>
        <taxon>Kitasatosporales</taxon>
        <taxon>Streptomycetaceae</taxon>
        <taxon>Streptomyces</taxon>
    </lineage>
</organism>
<dbReference type="EC" id="2.6.1.94" evidence="2"/>
<dbReference type="EC" id="2.6.1.93" evidence="2"/>
<dbReference type="EMBL" id="AJ582817">
    <property type="protein sequence ID" value="CAF60533.1"/>
    <property type="molecule type" value="Genomic_DNA"/>
</dbReference>
<dbReference type="EMBL" id="AB164642">
    <property type="protein sequence ID" value="BAD20756.1"/>
    <property type="molecule type" value="Genomic_DNA"/>
</dbReference>
<dbReference type="EMBL" id="AJ628422">
    <property type="protein sequence ID" value="CAF31586.1"/>
    <property type="molecule type" value="Genomic_DNA"/>
</dbReference>
<dbReference type="RefSeq" id="WP_055545102.1">
    <property type="nucleotide sequence ID" value="NZ_CP023699.1"/>
</dbReference>
<dbReference type="SMR" id="Q6L741"/>
<dbReference type="KEGG" id="ag:CAF60533"/>
<dbReference type="OrthoDB" id="9801052at2"/>
<dbReference type="BioCyc" id="MetaCyc:MONOMER-17221"/>
<dbReference type="UniPathway" id="UPA00965"/>
<dbReference type="GO" id="GO:0030170">
    <property type="term" value="F:pyridoxal phosphate binding"/>
    <property type="evidence" value="ECO:0007669"/>
    <property type="project" value="InterPro"/>
</dbReference>
<dbReference type="GO" id="GO:0008483">
    <property type="term" value="F:transaminase activity"/>
    <property type="evidence" value="ECO:0000314"/>
    <property type="project" value="UniProtKB"/>
</dbReference>
<dbReference type="GO" id="GO:1901133">
    <property type="term" value="P:kanamycin biosynthetic process"/>
    <property type="evidence" value="ECO:0000314"/>
    <property type="project" value="UniProtKB"/>
</dbReference>
<dbReference type="Gene3D" id="3.90.1150.10">
    <property type="entry name" value="Aspartate Aminotransferase, domain 1"/>
    <property type="match status" value="1"/>
</dbReference>
<dbReference type="Gene3D" id="3.40.640.10">
    <property type="entry name" value="Type I PLP-dependent aspartate aminotransferase-like (Major domain)"/>
    <property type="match status" value="1"/>
</dbReference>
<dbReference type="InterPro" id="IPR005814">
    <property type="entry name" value="Aminotrans_3"/>
</dbReference>
<dbReference type="InterPro" id="IPR049704">
    <property type="entry name" value="Aminotrans_3_PPA_site"/>
</dbReference>
<dbReference type="InterPro" id="IPR015424">
    <property type="entry name" value="PyrdxlP-dep_Trfase"/>
</dbReference>
<dbReference type="InterPro" id="IPR015421">
    <property type="entry name" value="PyrdxlP-dep_Trfase_major"/>
</dbReference>
<dbReference type="InterPro" id="IPR015422">
    <property type="entry name" value="PyrdxlP-dep_Trfase_small"/>
</dbReference>
<dbReference type="PANTHER" id="PTHR43713">
    <property type="entry name" value="GLUTAMATE-1-SEMIALDEHYDE 2,1-AMINOMUTASE"/>
    <property type="match status" value="1"/>
</dbReference>
<dbReference type="PANTHER" id="PTHR43713:SF3">
    <property type="entry name" value="GLUTAMATE-1-SEMIALDEHYDE 2,1-AMINOMUTASE 1, CHLOROPLASTIC-RELATED"/>
    <property type="match status" value="1"/>
</dbReference>
<dbReference type="Pfam" id="PF00202">
    <property type="entry name" value="Aminotran_3"/>
    <property type="match status" value="1"/>
</dbReference>
<dbReference type="SUPFAM" id="SSF53383">
    <property type="entry name" value="PLP-dependent transferases"/>
    <property type="match status" value="1"/>
</dbReference>
<dbReference type="PROSITE" id="PS00600">
    <property type="entry name" value="AA_TRANSFER_CLASS_3"/>
    <property type="match status" value="1"/>
</dbReference>